<proteinExistence type="evidence at protein level"/>
<feature type="chain" id="PRO_0000431388" description="UBAP1-MVB12-associated (UMA)-domain containing protein 1">
    <location>
        <begin position="1"/>
        <end position="137"/>
    </location>
</feature>
<feature type="domain" description="UMA" evidence="1">
    <location>
        <begin position="86"/>
        <end position="134"/>
    </location>
</feature>
<feature type="region of interest" description="Disordered" evidence="2">
    <location>
        <begin position="1"/>
        <end position="72"/>
    </location>
</feature>
<feature type="compositionally biased region" description="Basic and acidic residues" evidence="2">
    <location>
        <begin position="32"/>
        <end position="44"/>
    </location>
</feature>
<feature type="compositionally biased region" description="Polar residues" evidence="2">
    <location>
        <begin position="50"/>
        <end position="63"/>
    </location>
</feature>
<dbReference type="EMBL" id="AK295253">
    <property type="protein sequence ID" value="BAG58242.1"/>
    <property type="molecule type" value="mRNA"/>
</dbReference>
<dbReference type="EMBL" id="AC004948">
    <property type="status" value="NOT_ANNOTATED_CDS"/>
    <property type="molecule type" value="Genomic_DNA"/>
</dbReference>
<dbReference type="EMBL" id="AC006042">
    <property type="status" value="NOT_ANNOTATED_CDS"/>
    <property type="molecule type" value="Genomic_DNA"/>
</dbReference>
<dbReference type="EMBL" id="AC006465">
    <property type="status" value="NOT_ANNOTATED_CDS"/>
    <property type="molecule type" value="Genomic_DNA"/>
</dbReference>
<dbReference type="EMBL" id="AC007161">
    <property type="status" value="NOT_ANNOTATED_CDS"/>
    <property type="molecule type" value="Genomic_DNA"/>
</dbReference>
<dbReference type="EMBL" id="AC009473">
    <property type="status" value="NOT_ANNOTATED_CDS"/>
    <property type="molecule type" value="Genomic_DNA"/>
</dbReference>
<dbReference type="EMBL" id="KF458367">
    <property type="status" value="NOT_ANNOTATED_CDS"/>
    <property type="molecule type" value="Genomic_DNA"/>
</dbReference>
<dbReference type="EMBL" id="KF511046">
    <property type="status" value="NOT_ANNOTATED_CDS"/>
    <property type="molecule type" value="Genomic_DNA"/>
</dbReference>
<dbReference type="EMBL" id="CH236948">
    <property type="protein sequence ID" value="EAL24303.1"/>
    <property type="molecule type" value="Genomic_DNA"/>
</dbReference>
<dbReference type="EMBL" id="CH471073">
    <property type="protein sequence ID" value="EAW93606.1"/>
    <property type="molecule type" value="Genomic_DNA"/>
</dbReference>
<dbReference type="CCDS" id="CCDS83158.1"/>
<dbReference type="RefSeq" id="NP_001289277.1">
    <property type="nucleotide sequence ID" value="NM_001302348.2"/>
</dbReference>
<dbReference type="RefSeq" id="NP_001289278.1">
    <property type="nucleotide sequence ID" value="NM_001302349.2"/>
</dbReference>
<dbReference type="BioGRID" id="610246">
    <property type="interactions" value="15"/>
</dbReference>
<dbReference type="FunCoup" id="C9J7I0">
    <property type="interactions" value="329"/>
</dbReference>
<dbReference type="IntAct" id="C9J7I0">
    <property type="interactions" value="13"/>
</dbReference>
<dbReference type="STRING" id="9606.ENSP00000489648"/>
<dbReference type="iPTMnet" id="C9J7I0"/>
<dbReference type="PhosphoSitePlus" id="C9J7I0"/>
<dbReference type="BioMuta" id="UMAD1"/>
<dbReference type="jPOST" id="C9J7I0"/>
<dbReference type="MassIVE" id="C9J7I0"/>
<dbReference type="PaxDb" id="9606-ENSP00000386039"/>
<dbReference type="PeptideAtlas" id="C9J7I0"/>
<dbReference type="ProteomicsDB" id="601"/>
<dbReference type="Pumba" id="C9J7I0"/>
<dbReference type="DNASU" id="729852"/>
<dbReference type="Ensembl" id="ENST00000636849.1">
    <property type="protein sequence ID" value="ENSP00000489648.1"/>
    <property type="gene ID" value="ENSG00000219545.12"/>
</dbReference>
<dbReference type="Ensembl" id="ENST00000682710.1">
    <property type="protein sequence ID" value="ENSP00000507605.1"/>
    <property type="gene ID" value="ENSG00000219545.12"/>
</dbReference>
<dbReference type="GeneID" id="729852"/>
<dbReference type="KEGG" id="hsa:729852"/>
<dbReference type="MANE-Select" id="ENST00000682710.1">
    <property type="protein sequence ID" value="ENSP00000507605.1"/>
    <property type="RefSeq nucleotide sequence ID" value="NM_001302348.2"/>
    <property type="RefSeq protein sequence ID" value="NP_001289277.1"/>
</dbReference>
<dbReference type="AGR" id="HGNC:48955"/>
<dbReference type="CTD" id="729852"/>
<dbReference type="DisGeNET" id="729852"/>
<dbReference type="GeneCards" id="UMAD1"/>
<dbReference type="HGNC" id="HGNC:48955">
    <property type="gene designation" value="UMAD1"/>
</dbReference>
<dbReference type="HPA" id="ENSG00000219545">
    <property type="expression patterns" value="Low tissue specificity"/>
</dbReference>
<dbReference type="neXtProt" id="NX_C9J7I0"/>
<dbReference type="NIAGADS" id="ENSG00000219545"/>
<dbReference type="OpenTargets" id="ENSG00000219545"/>
<dbReference type="VEuPathDB" id="HostDB:ENSG00000219545"/>
<dbReference type="eggNOG" id="ENOG502S575">
    <property type="taxonomic scope" value="Eukaryota"/>
</dbReference>
<dbReference type="GeneTree" id="ENSGT00390000003051"/>
<dbReference type="InParanoid" id="C9J7I0"/>
<dbReference type="OMA" id="SPRDINH"/>
<dbReference type="OrthoDB" id="9872568at2759"/>
<dbReference type="PAN-GO" id="C9J7I0">
    <property type="GO annotations" value="0 GO annotations based on evolutionary models"/>
</dbReference>
<dbReference type="TreeFam" id="TF335997"/>
<dbReference type="PathwayCommons" id="C9J7I0"/>
<dbReference type="SignaLink" id="C9J7I0"/>
<dbReference type="BioGRID-ORCS" id="729852">
    <property type="hits" value="0 hits in 205 CRISPR screens"/>
</dbReference>
<dbReference type="ChiTaRS" id="UMAD1">
    <property type="organism name" value="human"/>
</dbReference>
<dbReference type="GenomeRNAi" id="729852"/>
<dbReference type="Pharos" id="C9J7I0">
    <property type="development level" value="Tdark"/>
</dbReference>
<dbReference type="PRO" id="PR:C9J7I0"/>
<dbReference type="Proteomes" id="UP000005640">
    <property type="component" value="Chromosome 7"/>
</dbReference>
<dbReference type="RNAct" id="C9J7I0">
    <property type="molecule type" value="protein"/>
</dbReference>
<dbReference type="Bgee" id="ENSG00000219545">
    <property type="expression patterns" value="Expressed in body of pancreas and 180 other cell types or tissues"/>
</dbReference>
<dbReference type="ExpressionAtlas" id="C9J7I0">
    <property type="expression patterns" value="baseline and differential"/>
</dbReference>
<dbReference type="InterPro" id="IPR053292">
    <property type="entry name" value="UBAP1-MVB12_assoc_domain"/>
</dbReference>
<dbReference type="InterPro" id="IPR023340">
    <property type="entry name" value="UMA"/>
</dbReference>
<dbReference type="PANTHER" id="PTHR36291">
    <property type="entry name" value="UBAP1-MVB12-ASSOCIATED (UMA)-DOMAIN CONTAINING PROTEIN 1"/>
    <property type="match status" value="1"/>
</dbReference>
<dbReference type="PANTHER" id="PTHR36291:SF1">
    <property type="entry name" value="UBAP1-MVB12-ASSOCIATED (UMA)-DOMAIN CONTAINING PROTEIN 1"/>
    <property type="match status" value="1"/>
</dbReference>
<dbReference type="PROSITE" id="PS51497">
    <property type="entry name" value="UMA"/>
    <property type="match status" value="1"/>
</dbReference>
<organism>
    <name type="scientific">Homo sapiens</name>
    <name type="common">Human</name>
    <dbReference type="NCBI Taxonomy" id="9606"/>
    <lineage>
        <taxon>Eukaryota</taxon>
        <taxon>Metazoa</taxon>
        <taxon>Chordata</taxon>
        <taxon>Craniata</taxon>
        <taxon>Vertebrata</taxon>
        <taxon>Euteleostomi</taxon>
        <taxon>Mammalia</taxon>
        <taxon>Eutheria</taxon>
        <taxon>Euarchontoglires</taxon>
        <taxon>Primates</taxon>
        <taxon>Haplorrhini</taxon>
        <taxon>Catarrhini</taxon>
        <taxon>Hominidae</taxon>
        <taxon>Homo</taxon>
    </lineage>
</organism>
<name>UMAD1_HUMAN</name>
<gene>
    <name evidence="3" type="primary">UMAD1</name>
    <name evidence="3" type="synonym">RPA3-AS1</name>
    <name evidence="3" type="synonym">RPA3OS</name>
</gene>
<accession>C9J7I0</accession>
<accession>A4D104</accession>
<evidence type="ECO:0000255" key="1">
    <source>
        <dbReference type="PROSITE-ProRule" id="PRU00830"/>
    </source>
</evidence>
<evidence type="ECO:0000256" key="2">
    <source>
        <dbReference type="SAM" id="MobiDB-lite"/>
    </source>
</evidence>
<evidence type="ECO:0000312" key="3">
    <source>
        <dbReference type="HGNC" id="HGNC:48955"/>
    </source>
</evidence>
<protein>
    <recommendedName>
        <fullName evidence="3">UBAP1-MVB12-associated (UMA)-domain containing protein 1</fullName>
    </recommendedName>
    <alternativeName>
        <fullName evidence="3">RPA3 antisense RNA 1</fullName>
    </alternativeName>
    <alternativeName>
        <fullName evidence="3">RPA3 opposite strand</fullName>
    </alternativeName>
</protein>
<comment type="interaction">
    <interactant intactId="EBI-10989060">
        <id>C9J7I0</id>
    </interactant>
    <interactant intactId="EBI-746969">
        <id>Q9H0R8</id>
        <label>GABARAPL1</label>
    </interactant>
    <organismsDiffer>false</organismsDiffer>
    <experiments>3</experiments>
</comment>
<comment type="interaction">
    <interactant intactId="EBI-10989060">
        <id>C9J7I0</id>
    </interactant>
    <interactant intactId="EBI-12001016">
        <id>P07101-3</id>
        <label>TH</label>
    </interactant>
    <organismsDiffer>false</organismsDiffer>
    <experiments>3</experiments>
</comment>
<reference key="1">
    <citation type="journal article" date="2004" name="Nat. Genet.">
        <title>Complete sequencing and characterization of 21,243 full-length human cDNAs.</title>
        <authorList>
            <person name="Ota T."/>
            <person name="Suzuki Y."/>
            <person name="Nishikawa T."/>
            <person name="Otsuki T."/>
            <person name="Sugiyama T."/>
            <person name="Irie R."/>
            <person name="Wakamatsu A."/>
            <person name="Hayashi K."/>
            <person name="Sato H."/>
            <person name="Nagai K."/>
            <person name="Kimura K."/>
            <person name="Makita H."/>
            <person name="Sekine M."/>
            <person name="Obayashi M."/>
            <person name="Nishi T."/>
            <person name="Shibahara T."/>
            <person name="Tanaka T."/>
            <person name="Ishii S."/>
            <person name="Yamamoto J."/>
            <person name="Saito K."/>
            <person name="Kawai Y."/>
            <person name="Isono Y."/>
            <person name="Nakamura Y."/>
            <person name="Nagahari K."/>
            <person name="Murakami K."/>
            <person name="Yasuda T."/>
            <person name="Iwayanagi T."/>
            <person name="Wagatsuma M."/>
            <person name="Shiratori A."/>
            <person name="Sudo H."/>
            <person name="Hosoiri T."/>
            <person name="Kaku Y."/>
            <person name="Kodaira H."/>
            <person name="Kondo H."/>
            <person name="Sugawara M."/>
            <person name="Takahashi M."/>
            <person name="Kanda K."/>
            <person name="Yokoi T."/>
            <person name="Furuya T."/>
            <person name="Kikkawa E."/>
            <person name="Omura Y."/>
            <person name="Abe K."/>
            <person name="Kamihara K."/>
            <person name="Katsuta N."/>
            <person name="Sato K."/>
            <person name="Tanikawa M."/>
            <person name="Yamazaki M."/>
            <person name="Ninomiya K."/>
            <person name="Ishibashi T."/>
            <person name="Yamashita H."/>
            <person name="Murakawa K."/>
            <person name="Fujimori K."/>
            <person name="Tanai H."/>
            <person name="Kimata M."/>
            <person name="Watanabe M."/>
            <person name="Hiraoka S."/>
            <person name="Chiba Y."/>
            <person name="Ishida S."/>
            <person name="Ono Y."/>
            <person name="Takiguchi S."/>
            <person name="Watanabe S."/>
            <person name="Yosida M."/>
            <person name="Hotuta T."/>
            <person name="Kusano J."/>
            <person name="Kanehori K."/>
            <person name="Takahashi-Fujii A."/>
            <person name="Hara H."/>
            <person name="Tanase T.-O."/>
            <person name="Nomura Y."/>
            <person name="Togiya S."/>
            <person name="Komai F."/>
            <person name="Hara R."/>
            <person name="Takeuchi K."/>
            <person name="Arita M."/>
            <person name="Imose N."/>
            <person name="Musashino K."/>
            <person name="Yuuki H."/>
            <person name="Oshima A."/>
            <person name="Sasaki N."/>
            <person name="Aotsuka S."/>
            <person name="Yoshikawa Y."/>
            <person name="Matsunawa H."/>
            <person name="Ichihara T."/>
            <person name="Shiohata N."/>
            <person name="Sano S."/>
            <person name="Moriya S."/>
            <person name="Momiyama H."/>
            <person name="Satoh N."/>
            <person name="Takami S."/>
            <person name="Terashima Y."/>
            <person name="Suzuki O."/>
            <person name="Nakagawa S."/>
            <person name="Senoh A."/>
            <person name="Mizoguchi H."/>
            <person name="Goto Y."/>
            <person name="Shimizu F."/>
            <person name="Wakebe H."/>
            <person name="Hishigaki H."/>
            <person name="Watanabe T."/>
            <person name="Sugiyama A."/>
            <person name="Takemoto M."/>
            <person name="Kawakami B."/>
            <person name="Yamazaki M."/>
            <person name="Watanabe K."/>
            <person name="Kumagai A."/>
            <person name="Itakura S."/>
            <person name="Fukuzumi Y."/>
            <person name="Fujimori Y."/>
            <person name="Komiyama M."/>
            <person name="Tashiro H."/>
            <person name="Tanigami A."/>
            <person name="Fujiwara T."/>
            <person name="Ono T."/>
            <person name="Yamada K."/>
            <person name="Fujii Y."/>
            <person name="Ozaki K."/>
            <person name="Hirao M."/>
            <person name="Ohmori Y."/>
            <person name="Kawabata A."/>
            <person name="Hikiji T."/>
            <person name="Kobatake N."/>
            <person name="Inagaki H."/>
            <person name="Ikema Y."/>
            <person name="Okamoto S."/>
            <person name="Okitani R."/>
            <person name="Kawakami T."/>
            <person name="Noguchi S."/>
            <person name="Itoh T."/>
            <person name="Shigeta K."/>
            <person name="Senba T."/>
            <person name="Matsumura K."/>
            <person name="Nakajima Y."/>
            <person name="Mizuno T."/>
            <person name="Morinaga M."/>
            <person name="Sasaki M."/>
            <person name="Togashi T."/>
            <person name="Oyama M."/>
            <person name="Hata H."/>
            <person name="Watanabe M."/>
            <person name="Komatsu T."/>
            <person name="Mizushima-Sugano J."/>
            <person name="Satoh T."/>
            <person name="Shirai Y."/>
            <person name="Takahashi Y."/>
            <person name="Nakagawa K."/>
            <person name="Okumura K."/>
            <person name="Nagase T."/>
            <person name="Nomura N."/>
            <person name="Kikuchi H."/>
            <person name="Masuho Y."/>
            <person name="Yamashita R."/>
            <person name="Nakai K."/>
            <person name="Yada T."/>
            <person name="Nakamura Y."/>
            <person name="Ohara O."/>
            <person name="Isogai T."/>
            <person name="Sugano S."/>
        </authorList>
    </citation>
    <scope>NUCLEOTIDE SEQUENCE [LARGE SCALE MRNA]</scope>
</reference>
<reference key="2">
    <citation type="journal article" date="2003" name="Nature">
        <title>The DNA sequence of human chromosome 7.</title>
        <authorList>
            <person name="Hillier L.W."/>
            <person name="Fulton R.S."/>
            <person name="Fulton L.A."/>
            <person name="Graves T.A."/>
            <person name="Pepin K.H."/>
            <person name="Wagner-McPherson C."/>
            <person name="Layman D."/>
            <person name="Maas J."/>
            <person name="Jaeger S."/>
            <person name="Walker R."/>
            <person name="Wylie K."/>
            <person name="Sekhon M."/>
            <person name="Becker M.C."/>
            <person name="O'Laughlin M.D."/>
            <person name="Schaller M.E."/>
            <person name="Fewell G.A."/>
            <person name="Delehaunty K.D."/>
            <person name="Miner T.L."/>
            <person name="Nash W.E."/>
            <person name="Cordes M."/>
            <person name="Du H."/>
            <person name="Sun H."/>
            <person name="Edwards J."/>
            <person name="Bradshaw-Cordum H."/>
            <person name="Ali J."/>
            <person name="Andrews S."/>
            <person name="Isak A."/>
            <person name="Vanbrunt A."/>
            <person name="Nguyen C."/>
            <person name="Du F."/>
            <person name="Lamar B."/>
            <person name="Courtney L."/>
            <person name="Kalicki J."/>
            <person name="Ozersky P."/>
            <person name="Bielicki L."/>
            <person name="Scott K."/>
            <person name="Holmes A."/>
            <person name="Harkins R."/>
            <person name="Harris A."/>
            <person name="Strong C.M."/>
            <person name="Hou S."/>
            <person name="Tomlinson C."/>
            <person name="Dauphin-Kohlberg S."/>
            <person name="Kozlowicz-Reilly A."/>
            <person name="Leonard S."/>
            <person name="Rohlfing T."/>
            <person name="Rock S.M."/>
            <person name="Tin-Wollam A.-M."/>
            <person name="Abbott A."/>
            <person name="Minx P."/>
            <person name="Maupin R."/>
            <person name="Strowmatt C."/>
            <person name="Latreille P."/>
            <person name="Miller N."/>
            <person name="Johnson D."/>
            <person name="Murray J."/>
            <person name="Woessner J.P."/>
            <person name="Wendl M.C."/>
            <person name="Yang S.-P."/>
            <person name="Schultz B.R."/>
            <person name="Wallis J.W."/>
            <person name="Spieth J."/>
            <person name="Bieri T.A."/>
            <person name="Nelson J.O."/>
            <person name="Berkowicz N."/>
            <person name="Wohldmann P.E."/>
            <person name="Cook L.L."/>
            <person name="Hickenbotham M.T."/>
            <person name="Eldred J."/>
            <person name="Williams D."/>
            <person name="Bedell J.A."/>
            <person name="Mardis E.R."/>
            <person name="Clifton S.W."/>
            <person name="Chissoe S.L."/>
            <person name="Marra M.A."/>
            <person name="Raymond C."/>
            <person name="Haugen E."/>
            <person name="Gillett W."/>
            <person name="Zhou Y."/>
            <person name="James R."/>
            <person name="Phelps K."/>
            <person name="Iadanoto S."/>
            <person name="Bubb K."/>
            <person name="Simms E."/>
            <person name="Levy R."/>
            <person name="Clendenning J."/>
            <person name="Kaul R."/>
            <person name="Kent W.J."/>
            <person name="Furey T.S."/>
            <person name="Baertsch R.A."/>
            <person name="Brent M.R."/>
            <person name="Keibler E."/>
            <person name="Flicek P."/>
            <person name="Bork P."/>
            <person name="Suyama M."/>
            <person name="Bailey J.A."/>
            <person name="Portnoy M.E."/>
            <person name="Torrents D."/>
            <person name="Chinwalla A.T."/>
            <person name="Gish W.R."/>
            <person name="Eddy S.R."/>
            <person name="McPherson J.D."/>
            <person name="Olson M.V."/>
            <person name="Eichler E.E."/>
            <person name="Green E.D."/>
            <person name="Waterston R.H."/>
            <person name="Wilson R.K."/>
        </authorList>
    </citation>
    <scope>NUCLEOTIDE SEQUENCE [LARGE SCALE GENOMIC DNA]</scope>
</reference>
<reference key="3">
    <citation type="journal article" date="2003" name="Science">
        <title>Human chromosome 7: DNA sequence and biology.</title>
        <authorList>
            <person name="Scherer S.W."/>
            <person name="Cheung J."/>
            <person name="MacDonald J.R."/>
            <person name="Osborne L.R."/>
            <person name="Nakabayashi K."/>
            <person name="Herbrick J.-A."/>
            <person name="Carson A.R."/>
            <person name="Parker-Katiraee L."/>
            <person name="Skaug J."/>
            <person name="Khaja R."/>
            <person name="Zhang J."/>
            <person name="Hudek A.K."/>
            <person name="Li M."/>
            <person name="Haddad M."/>
            <person name="Duggan G.E."/>
            <person name="Fernandez B.A."/>
            <person name="Kanematsu E."/>
            <person name="Gentles S."/>
            <person name="Christopoulos C.C."/>
            <person name="Choufani S."/>
            <person name="Kwasnicka D."/>
            <person name="Zheng X.H."/>
            <person name="Lai Z."/>
            <person name="Nusskern D.R."/>
            <person name="Zhang Q."/>
            <person name="Gu Z."/>
            <person name="Lu F."/>
            <person name="Zeesman S."/>
            <person name="Nowaczyk M.J."/>
            <person name="Teshima I."/>
            <person name="Chitayat D."/>
            <person name="Shuman C."/>
            <person name="Weksberg R."/>
            <person name="Zackai E.H."/>
            <person name="Grebe T.A."/>
            <person name="Cox S.R."/>
            <person name="Kirkpatrick S.J."/>
            <person name="Rahman N."/>
            <person name="Friedman J.M."/>
            <person name="Heng H.H.Q."/>
            <person name="Pelicci P.G."/>
            <person name="Lo-Coco F."/>
            <person name="Belloni E."/>
            <person name="Shaffer L.G."/>
            <person name="Pober B."/>
            <person name="Morton C.C."/>
            <person name="Gusella J.F."/>
            <person name="Bruns G.A.P."/>
            <person name="Korf B.R."/>
            <person name="Quade B.J."/>
            <person name="Ligon A.H."/>
            <person name="Ferguson H."/>
            <person name="Higgins A.W."/>
            <person name="Leach N.T."/>
            <person name="Herrick S.R."/>
            <person name="Lemyre E."/>
            <person name="Farra C.G."/>
            <person name="Kim H.-G."/>
            <person name="Summers A.M."/>
            <person name="Gripp K.W."/>
            <person name="Roberts W."/>
            <person name="Szatmari P."/>
            <person name="Winsor E.J.T."/>
            <person name="Grzeschik K.-H."/>
            <person name="Teebi A."/>
            <person name="Minassian B.A."/>
            <person name="Kere J."/>
            <person name="Armengol L."/>
            <person name="Pujana M.A."/>
            <person name="Estivill X."/>
            <person name="Wilson M.D."/>
            <person name="Koop B.F."/>
            <person name="Tosi S."/>
            <person name="Moore G.E."/>
            <person name="Boright A.P."/>
            <person name="Zlotorynski E."/>
            <person name="Kerem B."/>
            <person name="Kroisel P.M."/>
            <person name="Petek E."/>
            <person name="Oscier D.G."/>
            <person name="Mould S.J."/>
            <person name="Doehner H."/>
            <person name="Doehner K."/>
            <person name="Rommens J.M."/>
            <person name="Vincent J.B."/>
            <person name="Venter J.C."/>
            <person name="Li P.W."/>
            <person name="Mural R.J."/>
            <person name="Adams M.D."/>
            <person name="Tsui L.-C."/>
        </authorList>
    </citation>
    <scope>NUCLEOTIDE SEQUENCE [LARGE SCALE GENOMIC DNA]</scope>
    <source>
        <tissue>Caudate nucleus</tissue>
    </source>
</reference>
<reference key="4">
    <citation type="submission" date="2005-07" db="EMBL/GenBank/DDBJ databases">
        <authorList>
            <person name="Mural R.J."/>
            <person name="Istrail S."/>
            <person name="Sutton G.G."/>
            <person name="Florea L."/>
            <person name="Halpern A.L."/>
            <person name="Mobarry C.M."/>
            <person name="Lippert R."/>
            <person name="Walenz B."/>
            <person name="Shatkay H."/>
            <person name="Dew I."/>
            <person name="Miller J.R."/>
            <person name="Flanigan M.J."/>
            <person name="Edwards N.J."/>
            <person name="Bolanos R."/>
            <person name="Fasulo D."/>
            <person name="Halldorsson B.V."/>
            <person name="Hannenhalli S."/>
            <person name="Turner R."/>
            <person name="Yooseph S."/>
            <person name="Lu F."/>
            <person name="Nusskern D.R."/>
            <person name="Shue B.C."/>
            <person name="Zheng X.H."/>
            <person name="Zhong F."/>
            <person name="Delcher A.L."/>
            <person name="Huson D.H."/>
            <person name="Kravitz S.A."/>
            <person name="Mouchard L."/>
            <person name="Reinert K."/>
            <person name="Remington K.A."/>
            <person name="Clark A.G."/>
            <person name="Waterman M.S."/>
            <person name="Eichler E.E."/>
            <person name="Adams M.D."/>
            <person name="Hunkapiller M.W."/>
            <person name="Myers E.W."/>
            <person name="Venter J.C."/>
        </authorList>
    </citation>
    <scope>NUCLEOTIDE SEQUENCE [LARGE SCALE GENOMIC DNA]</scope>
</reference>
<sequence>MFHFFRKPPESKKPSVPETEADGFVLLGDTTDEQRMTARGKTSDIEANQPLETNKENSSSVTVSDPEMENKAGQTLENSSLMAELLSDVPFTLAPHVLAVQGTITDLPDHLLSYDGSENLSRFWYDFTLENSVLCDS</sequence>
<keyword id="KW-1267">Proteomics identification</keyword>
<keyword id="KW-1185">Reference proteome</keyword>